<gene>
    <name type="primary">fimE</name>
    <name type="ordered locus">SF4209</name>
    <name type="ordered locus">S4466</name>
</gene>
<proteinExistence type="inferred from homology"/>
<sequence length="198" mass="23116">MSKRRYLTGKEVQAMMQAVCYGATGARDYCLILLAYRHGMRISELLDLHYQDLDLNEGRINIRRLKNGFSTVHPLRFDEREAVERWTQERANWKGADRTDAIFISRRGSRLSRQQAYRIIRDAGIEAGTVTQTHPHMLRHACGYELAERGADTRLIQDYLGHRNIRHTVRYTASNAARFAGLWERNNLINEKLKREEV</sequence>
<keyword id="KW-0229">DNA integration</keyword>
<keyword id="KW-0233">DNA recombination</keyword>
<keyword id="KW-1029">Fimbrium biogenesis</keyword>
<keyword id="KW-1185">Reference proteome</keyword>
<keyword id="KW-0804">Transcription</keyword>
<keyword id="KW-0805">Transcription regulation</keyword>
<accession>P0ADH9</accession>
<accession>P04741</accession>
<feature type="chain" id="PRO_0000197543" description="Type 1 fimbriae regulatory protein FimE">
    <location>
        <begin position="1"/>
        <end position="198"/>
    </location>
</feature>
<feature type="domain" description="Tyr recombinase" evidence="2">
    <location>
        <begin position="2"/>
        <end position="184"/>
    </location>
</feature>
<feature type="active site" evidence="2">
    <location>
        <position position="41"/>
    </location>
</feature>
<feature type="active site" evidence="2">
    <location>
        <position position="66"/>
    </location>
</feature>
<feature type="active site" evidence="2">
    <location>
        <position position="136"/>
    </location>
</feature>
<feature type="active site" evidence="2">
    <location>
        <position position="139"/>
    </location>
</feature>
<feature type="active site" evidence="2">
    <location>
        <position position="162"/>
    </location>
</feature>
<feature type="active site" description="O-(3'-phospho-DNA)-tyrosine intermediate" evidence="2">
    <location>
        <position position="171"/>
    </location>
</feature>
<evidence type="ECO:0000250" key="1"/>
<evidence type="ECO:0000255" key="2">
    <source>
        <dbReference type="PROSITE-ProRule" id="PRU01246"/>
    </source>
</evidence>
<evidence type="ECO:0000305" key="3"/>
<name>FIME_SHIFL</name>
<dbReference type="EMBL" id="AE005674">
    <property type="protein sequence ID" value="AAN45629.1"/>
    <property type="molecule type" value="Genomic_DNA"/>
</dbReference>
<dbReference type="EMBL" id="AE014073">
    <property type="protein sequence ID" value="AAP19415.1"/>
    <property type="molecule type" value="Genomic_DNA"/>
</dbReference>
<dbReference type="RefSeq" id="NP_709922.1">
    <property type="nucleotide sequence ID" value="NC_004337.2"/>
</dbReference>
<dbReference type="RefSeq" id="WP_000044711.1">
    <property type="nucleotide sequence ID" value="NZ_WPGW01000227.1"/>
</dbReference>
<dbReference type="SMR" id="P0ADH9"/>
<dbReference type="STRING" id="198214.SF4209"/>
<dbReference type="PaxDb" id="198214-SF4209"/>
<dbReference type="GeneID" id="1026397"/>
<dbReference type="GeneID" id="75206127"/>
<dbReference type="KEGG" id="sfl:SF4209"/>
<dbReference type="KEGG" id="sfx:S4466"/>
<dbReference type="PATRIC" id="fig|198214.7.peg.4965"/>
<dbReference type="HOGENOM" id="CLU_027562_39_0_6"/>
<dbReference type="Proteomes" id="UP000001006">
    <property type="component" value="Chromosome"/>
</dbReference>
<dbReference type="Proteomes" id="UP000002673">
    <property type="component" value="Chromosome"/>
</dbReference>
<dbReference type="GO" id="GO:0003677">
    <property type="term" value="F:DNA binding"/>
    <property type="evidence" value="ECO:0007669"/>
    <property type="project" value="InterPro"/>
</dbReference>
<dbReference type="GO" id="GO:0015074">
    <property type="term" value="P:DNA integration"/>
    <property type="evidence" value="ECO:0007669"/>
    <property type="project" value="UniProtKB-KW"/>
</dbReference>
<dbReference type="GO" id="GO:0006310">
    <property type="term" value="P:DNA recombination"/>
    <property type="evidence" value="ECO:0007669"/>
    <property type="project" value="UniProtKB-KW"/>
</dbReference>
<dbReference type="FunFam" id="1.10.443.10:FF:000003">
    <property type="entry name" value="Type 1 fimbriae regulatory protein FimE"/>
    <property type="match status" value="1"/>
</dbReference>
<dbReference type="Gene3D" id="1.10.443.10">
    <property type="entry name" value="Intergrase catalytic core"/>
    <property type="match status" value="1"/>
</dbReference>
<dbReference type="InterPro" id="IPR011010">
    <property type="entry name" value="DNA_brk_join_enz"/>
</dbReference>
<dbReference type="InterPro" id="IPR013762">
    <property type="entry name" value="Integrase-like_cat_sf"/>
</dbReference>
<dbReference type="InterPro" id="IPR002104">
    <property type="entry name" value="Integrase_catalytic"/>
</dbReference>
<dbReference type="InterPro" id="IPR050090">
    <property type="entry name" value="Tyrosine_recombinase_XerCD"/>
</dbReference>
<dbReference type="NCBIfam" id="NF007370">
    <property type="entry name" value="PRK09870.1"/>
    <property type="match status" value="1"/>
</dbReference>
<dbReference type="NCBIfam" id="NF007371">
    <property type="entry name" value="PRK09871.1"/>
    <property type="match status" value="1"/>
</dbReference>
<dbReference type="PANTHER" id="PTHR30349">
    <property type="entry name" value="PHAGE INTEGRASE-RELATED"/>
    <property type="match status" value="1"/>
</dbReference>
<dbReference type="PANTHER" id="PTHR30349:SF62">
    <property type="entry name" value="TYPE 1 FIMBRIAE REGULATORY PROTEIN FIMB-RELATED"/>
    <property type="match status" value="1"/>
</dbReference>
<dbReference type="Pfam" id="PF00589">
    <property type="entry name" value="Phage_integrase"/>
    <property type="match status" value="1"/>
</dbReference>
<dbReference type="SUPFAM" id="SSF56349">
    <property type="entry name" value="DNA breaking-rejoining enzymes"/>
    <property type="match status" value="1"/>
</dbReference>
<dbReference type="PROSITE" id="PS51898">
    <property type="entry name" value="TYR_RECOMBINASE"/>
    <property type="match status" value="1"/>
</dbReference>
<protein>
    <recommendedName>
        <fullName>Type 1 fimbriae regulatory protein FimE</fullName>
    </recommendedName>
</protein>
<comment type="function">
    <text evidence="1">FimE is one of the 2 regulatory proteins which control the phase variation of type 1 fimbriae in E.coli. These proteins mediate the periodic inversion of a 300bp DNA segment that harbors the promoter for the fimbrial structural gene, fimA. FimE switches fimA off (By similarity).</text>
</comment>
<comment type="similarity">
    <text evidence="3">Belongs to the 'phage' integrase family.</text>
</comment>
<reference key="1">
    <citation type="journal article" date="2002" name="Nucleic Acids Res.">
        <title>Genome sequence of Shigella flexneri 2a: insights into pathogenicity through comparison with genomes of Escherichia coli K12 and O157.</title>
        <authorList>
            <person name="Jin Q."/>
            <person name="Yuan Z."/>
            <person name="Xu J."/>
            <person name="Wang Y."/>
            <person name="Shen Y."/>
            <person name="Lu W."/>
            <person name="Wang J."/>
            <person name="Liu H."/>
            <person name="Yang J."/>
            <person name="Yang F."/>
            <person name="Zhang X."/>
            <person name="Zhang J."/>
            <person name="Yang G."/>
            <person name="Wu H."/>
            <person name="Qu D."/>
            <person name="Dong J."/>
            <person name="Sun L."/>
            <person name="Xue Y."/>
            <person name="Zhao A."/>
            <person name="Gao Y."/>
            <person name="Zhu J."/>
            <person name="Kan B."/>
            <person name="Ding K."/>
            <person name="Chen S."/>
            <person name="Cheng H."/>
            <person name="Yao Z."/>
            <person name="He B."/>
            <person name="Chen R."/>
            <person name="Ma D."/>
            <person name="Qiang B."/>
            <person name="Wen Y."/>
            <person name="Hou Y."/>
            <person name="Yu J."/>
        </authorList>
    </citation>
    <scope>NUCLEOTIDE SEQUENCE [LARGE SCALE GENOMIC DNA]</scope>
    <source>
        <strain>301 / Serotype 2a</strain>
    </source>
</reference>
<reference key="2">
    <citation type="journal article" date="2003" name="Infect. Immun.">
        <title>Complete genome sequence and comparative genomics of Shigella flexneri serotype 2a strain 2457T.</title>
        <authorList>
            <person name="Wei J."/>
            <person name="Goldberg M.B."/>
            <person name="Burland V."/>
            <person name="Venkatesan M.M."/>
            <person name="Deng W."/>
            <person name="Fournier G."/>
            <person name="Mayhew G.F."/>
            <person name="Plunkett G. III"/>
            <person name="Rose D.J."/>
            <person name="Darling A."/>
            <person name="Mau B."/>
            <person name="Perna N.T."/>
            <person name="Payne S.M."/>
            <person name="Runyen-Janecky L.J."/>
            <person name="Zhou S."/>
            <person name="Schwartz D.C."/>
            <person name="Blattner F.R."/>
        </authorList>
    </citation>
    <scope>NUCLEOTIDE SEQUENCE [LARGE SCALE GENOMIC DNA]</scope>
    <source>
        <strain>ATCC 700930 / 2457T / Serotype 2a</strain>
    </source>
</reference>
<organism>
    <name type="scientific">Shigella flexneri</name>
    <dbReference type="NCBI Taxonomy" id="623"/>
    <lineage>
        <taxon>Bacteria</taxon>
        <taxon>Pseudomonadati</taxon>
        <taxon>Pseudomonadota</taxon>
        <taxon>Gammaproteobacteria</taxon>
        <taxon>Enterobacterales</taxon>
        <taxon>Enterobacteriaceae</taxon>
        <taxon>Shigella</taxon>
    </lineage>
</organism>